<gene>
    <name evidence="1" type="primary">gmhA</name>
    <name type="ordered locus">ECIAI39_0430</name>
</gene>
<comment type="function">
    <text evidence="1">Catalyzes the isomerization of sedoheptulose 7-phosphate in D-glycero-D-manno-heptose 7-phosphate.</text>
</comment>
<comment type="catalytic activity">
    <reaction evidence="1">
        <text>2 D-sedoheptulose 7-phosphate = D-glycero-alpha-D-manno-heptose 7-phosphate + D-glycero-beta-D-manno-heptose 7-phosphate</text>
        <dbReference type="Rhea" id="RHEA:27489"/>
        <dbReference type="ChEBI" id="CHEBI:57483"/>
        <dbReference type="ChEBI" id="CHEBI:60203"/>
        <dbReference type="ChEBI" id="CHEBI:60204"/>
        <dbReference type="EC" id="5.3.1.28"/>
    </reaction>
</comment>
<comment type="cofactor">
    <cofactor evidence="1">
        <name>Zn(2+)</name>
        <dbReference type="ChEBI" id="CHEBI:29105"/>
    </cofactor>
    <text evidence="1">Binds 1 zinc ion per subunit.</text>
</comment>
<comment type="pathway">
    <text evidence="1">Carbohydrate biosynthesis; D-glycero-D-manno-heptose 7-phosphate biosynthesis; D-glycero-alpha-D-manno-heptose 7-phosphate and D-glycero-beta-D-manno-heptose 7-phosphate from sedoheptulose 7-phosphate: step 1/1.</text>
</comment>
<comment type="subunit">
    <text evidence="1">Homotetramer.</text>
</comment>
<comment type="subcellular location">
    <subcellularLocation>
        <location evidence="1">Cytoplasm</location>
    </subcellularLocation>
</comment>
<comment type="miscellaneous">
    <text evidence="1">The reaction produces a racemic mixture of D-glycero-alpha-D-manno-heptose 7-phosphate and D-glycero-beta-D-manno-heptose 7-phosphate.</text>
</comment>
<comment type="similarity">
    <text evidence="1">Belongs to the SIS family. GmhA subfamily.</text>
</comment>
<feature type="chain" id="PRO_1000197002" description="Phosphoheptose isomerase">
    <location>
        <begin position="1"/>
        <end position="192"/>
    </location>
</feature>
<feature type="domain" description="SIS" evidence="1">
    <location>
        <begin position="37"/>
        <end position="192"/>
    </location>
</feature>
<feature type="binding site" evidence="1">
    <location>
        <begin position="52"/>
        <end position="54"/>
    </location>
    <ligand>
        <name>substrate</name>
    </ligand>
</feature>
<feature type="binding site" evidence="1">
    <location>
        <position position="61"/>
    </location>
    <ligand>
        <name>Zn(2+)</name>
        <dbReference type="ChEBI" id="CHEBI:29105"/>
    </ligand>
</feature>
<feature type="binding site" evidence="1">
    <location>
        <position position="65"/>
    </location>
    <ligand>
        <name>substrate</name>
    </ligand>
</feature>
<feature type="binding site" evidence="1">
    <location>
        <position position="65"/>
    </location>
    <ligand>
        <name>Zn(2+)</name>
        <dbReference type="ChEBI" id="CHEBI:29105"/>
    </ligand>
</feature>
<feature type="binding site" evidence="1">
    <location>
        <begin position="93"/>
        <end position="94"/>
    </location>
    <ligand>
        <name>substrate</name>
    </ligand>
</feature>
<feature type="binding site" evidence="1">
    <location>
        <begin position="119"/>
        <end position="121"/>
    </location>
    <ligand>
        <name>substrate</name>
    </ligand>
</feature>
<feature type="binding site" evidence="1">
    <location>
        <position position="124"/>
    </location>
    <ligand>
        <name>substrate</name>
    </ligand>
</feature>
<feature type="binding site" evidence="1">
    <location>
        <position position="172"/>
    </location>
    <ligand>
        <name>substrate</name>
    </ligand>
</feature>
<feature type="binding site" evidence="1">
    <location>
        <position position="172"/>
    </location>
    <ligand>
        <name>Zn(2+)</name>
        <dbReference type="ChEBI" id="CHEBI:29105"/>
    </ligand>
</feature>
<feature type="binding site" evidence="1">
    <location>
        <position position="180"/>
    </location>
    <ligand>
        <name>Zn(2+)</name>
        <dbReference type="ChEBI" id="CHEBI:29105"/>
    </ligand>
</feature>
<keyword id="KW-0119">Carbohydrate metabolism</keyword>
<keyword id="KW-0963">Cytoplasm</keyword>
<keyword id="KW-0413">Isomerase</keyword>
<keyword id="KW-0479">Metal-binding</keyword>
<keyword id="KW-0862">Zinc</keyword>
<accession>B7NKV9</accession>
<evidence type="ECO:0000255" key="1">
    <source>
        <dbReference type="HAMAP-Rule" id="MF_00067"/>
    </source>
</evidence>
<name>GMHA_ECO7I</name>
<protein>
    <recommendedName>
        <fullName evidence="1">Phosphoheptose isomerase</fullName>
        <ecNumber evidence="1">5.3.1.28</ecNumber>
    </recommendedName>
    <alternativeName>
        <fullName evidence="1">Sedoheptulose 7-phosphate isomerase</fullName>
    </alternativeName>
</protein>
<dbReference type="EC" id="5.3.1.28" evidence="1"/>
<dbReference type="EMBL" id="CU928164">
    <property type="protein sequence ID" value="CAR16568.1"/>
    <property type="molecule type" value="Genomic_DNA"/>
</dbReference>
<dbReference type="RefSeq" id="YP_002406463.1">
    <property type="nucleotide sequence ID" value="NC_011750.1"/>
</dbReference>
<dbReference type="SMR" id="B7NKV9"/>
<dbReference type="STRING" id="585057.ECIAI39_0430"/>
<dbReference type="KEGG" id="ect:ECIAI39_0430"/>
<dbReference type="PATRIC" id="fig|585057.6.peg.459"/>
<dbReference type="HOGENOM" id="CLU_080999_4_0_6"/>
<dbReference type="UniPathway" id="UPA00041">
    <property type="reaction ID" value="UER00436"/>
</dbReference>
<dbReference type="Proteomes" id="UP000000749">
    <property type="component" value="Chromosome"/>
</dbReference>
<dbReference type="GO" id="GO:0005737">
    <property type="term" value="C:cytoplasm"/>
    <property type="evidence" value="ECO:0007669"/>
    <property type="project" value="UniProtKB-SubCell"/>
</dbReference>
<dbReference type="GO" id="GO:0097367">
    <property type="term" value="F:carbohydrate derivative binding"/>
    <property type="evidence" value="ECO:0007669"/>
    <property type="project" value="InterPro"/>
</dbReference>
<dbReference type="GO" id="GO:0008968">
    <property type="term" value="F:D-sedoheptulose 7-phosphate isomerase activity"/>
    <property type="evidence" value="ECO:0007669"/>
    <property type="project" value="UniProtKB-UniRule"/>
</dbReference>
<dbReference type="GO" id="GO:0008270">
    <property type="term" value="F:zinc ion binding"/>
    <property type="evidence" value="ECO:0007669"/>
    <property type="project" value="UniProtKB-UniRule"/>
</dbReference>
<dbReference type="GO" id="GO:0005975">
    <property type="term" value="P:carbohydrate metabolic process"/>
    <property type="evidence" value="ECO:0007669"/>
    <property type="project" value="UniProtKB-UniRule"/>
</dbReference>
<dbReference type="GO" id="GO:2001061">
    <property type="term" value="P:D-glycero-D-manno-heptose 7-phosphate biosynthetic process"/>
    <property type="evidence" value="ECO:0007669"/>
    <property type="project" value="UniProtKB-UniPathway"/>
</dbReference>
<dbReference type="CDD" id="cd05006">
    <property type="entry name" value="SIS_GmhA"/>
    <property type="match status" value="1"/>
</dbReference>
<dbReference type="FunFam" id="3.40.50.10490:FF:000013">
    <property type="entry name" value="Phosphoheptose isomerase"/>
    <property type="match status" value="1"/>
</dbReference>
<dbReference type="Gene3D" id="3.40.50.10490">
    <property type="entry name" value="Glucose-6-phosphate isomerase like protein, domain 1"/>
    <property type="match status" value="1"/>
</dbReference>
<dbReference type="HAMAP" id="MF_00067">
    <property type="entry name" value="GmhA"/>
    <property type="match status" value="1"/>
</dbReference>
<dbReference type="InterPro" id="IPR035461">
    <property type="entry name" value="GmhA/DiaA"/>
</dbReference>
<dbReference type="InterPro" id="IPR004515">
    <property type="entry name" value="Phosphoheptose_Isoase"/>
</dbReference>
<dbReference type="InterPro" id="IPR001347">
    <property type="entry name" value="SIS_dom"/>
</dbReference>
<dbReference type="InterPro" id="IPR046348">
    <property type="entry name" value="SIS_dom_sf"/>
</dbReference>
<dbReference type="InterPro" id="IPR050099">
    <property type="entry name" value="SIS_GmhA/DiaA_subfam"/>
</dbReference>
<dbReference type="NCBIfam" id="TIGR00441">
    <property type="entry name" value="gmhA"/>
    <property type="match status" value="1"/>
</dbReference>
<dbReference type="NCBIfam" id="NF001628">
    <property type="entry name" value="PRK00414.1"/>
    <property type="match status" value="1"/>
</dbReference>
<dbReference type="PANTHER" id="PTHR30390:SF7">
    <property type="entry name" value="PHOSPHOHEPTOSE ISOMERASE"/>
    <property type="match status" value="1"/>
</dbReference>
<dbReference type="PANTHER" id="PTHR30390">
    <property type="entry name" value="SEDOHEPTULOSE 7-PHOSPHATE ISOMERASE / DNAA INITIATOR-ASSOCIATING FACTOR FOR REPLICATION INITIATION"/>
    <property type="match status" value="1"/>
</dbReference>
<dbReference type="Pfam" id="PF13580">
    <property type="entry name" value="SIS_2"/>
    <property type="match status" value="1"/>
</dbReference>
<dbReference type="SUPFAM" id="SSF53697">
    <property type="entry name" value="SIS domain"/>
    <property type="match status" value="1"/>
</dbReference>
<dbReference type="PROSITE" id="PS51464">
    <property type="entry name" value="SIS"/>
    <property type="match status" value="1"/>
</dbReference>
<organism>
    <name type="scientific">Escherichia coli O7:K1 (strain IAI39 / ExPEC)</name>
    <dbReference type="NCBI Taxonomy" id="585057"/>
    <lineage>
        <taxon>Bacteria</taxon>
        <taxon>Pseudomonadati</taxon>
        <taxon>Pseudomonadota</taxon>
        <taxon>Gammaproteobacteria</taxon>
        <taxon>Enterobacterales</taxon>
        <taxon>Enterobacteriaceae</taxon>
        <taxon>Escherichia</taxon>
    </lineage>
</organism>
<proteinExistence type="inferred from homology"/>
<sequence>MYQDLIRNELNEAAETLANFLKDDANIHAIQRAAVLLADSFKGGGKVLSCGNGGSHCDAMHFAEELTGRYRENRPGYPAIAISDVSHISCVGNDFGFNDIFSRYVEAVGREGDVLLGISTSGNSANVIKAIAAAREKGMKVITLTGKDGGKMAGTADIEIRVPHFGYADRIQEIHIKVIHILIQLIEKEMVK</sequence>
<reference key="1">
    <citation type="journal article" date="2009" name="PLoS Genet.">
        <title>Organised genome dynamics in the Escherichia coli species results in highly diverse adaptive paths.</title>
        <authorList>
            <person name="Touchon M."/>
            <person name="Hoede C."/>
            <person name="Tenaillon O."/>
            <person name="Barbe V."/>
            <person name="Baeriswyl S."/>
            <person name="Bidet P."/>
            <person name="Bingen E."/>
            <person name="Bonacorsi S."/>
            <person name="Bouchier C."/>
            <person name="Bouvet O."/>
            <person name="Calteau A."/>
            <person name="Chiapello H."/>
            <person name="Clermont O."/>
            <person name="Cruveiller S."/>
            <person name="Danchin A."/>
            <person name="Diard M."/>
            <person name="Dossat C."/>
            <person name="Karoui M.E."/>
            <person name="Frapy E."/>
            <person name="Garry L."/>
            <person name="Ghigo J.M."/>
            <person name="Gilles A.M."/>
            <person name="Johnson J."/>
            <person name="Le Bouguenec C."/>
            <person name="Lescat M."/>
            <person name="Mangenot S."/>
            <person name="Martinez-Jehanne V."/>
            <person name="Matic I."/>
            <person name="Nassif X."/>
            <person name="Oztas S."/>
            <person name="Petit M.A."/>
            <person name="Pichon C."/>
            <person name="Rouy Z."/>
            <person name="Ruf C.S."/>
            <person name="Schneider D."/>
            <person name="Tourret J."/>
            <person name="Vacherie B."/>
            <person name="Vallenet D."/>
            <person name="Medigue C."/>
            <person name="Rocha E.P.C."/>
            <person name="Denamur E."/>
        </authorList>
    </citation>
    <scope>NUCLEOTIDE SEQUENCE [LARGE SCALE GENOMIC DNA]</scope>
    <source>
        <strain>IAI39 / ExPEC</strain>
    </source>
</reference>